<reference key="1">
    <citation type="submission" date="2008-04" db="EMBL/GenBank/DDBJ databases">
        <title>Complete sequence of chromosome of Exiguobacterium sibiricum 255-15.</title>
        <authorList>
            <consortium name="US DOE Joint Genome Institute"/>
            <person name="Copeland A."/>
            <person name="Lucas S."/>
            <person name="Lapidus A."/>
            <person name="Glavina del Rio T."/>
            <person name="Dalin E."/>
            <person name="Tice H."/>
            <person name="Bruce D."/>
            <person name="Goodwin L."/>
            <person name="Pitluck S."/>
            <person name="Kiss H."/>
            <person name="Chertkov O."/>
            <person name="Monk C."/>
            <person name="Brettin T."/>
            <person name="Detter J.C."/>
            <person name="Han C."/>
            <person name="Kuske C.R."/>
            <person name="Schmutz J."/>
            <person name="Larimer F."/>
            <person name="Land M."/>
            <person name="Hauser L."/>
            <person name="Kyrpides N."/>
            <person name="Mikhailova N."/>
            <person name="Vishnivetskaya T."/>
            <person name="Rodrigues D.F."/>
            <person name="Gilichinsky D."/>
            <person name="Tiedje J."/>
            <person name="Richardson P."/>
        </authorList>
    </citation>
    <scope>NUCLEOTIDE SEQUENCE [LARGE SCALE GENOMIC DNA]</scope>
    <source>
        <strain>DSM 17290 / CCUG 55495 / CIP 109462 / JCM 13490 / 255-15</strain>
    </source>
</reference>
<sequence>MKQVLLGGIHFYQKVISPMKPATCRFYPTCSHYGKEAIEKHGALRGGYLTTRRLLRCQPFHPGGLDFVPETFDWKAPLQRENPAEHQK</sequence>
<proteinExistence type="inferred from homology"/>
<protein>
    <recommendedName>
        <fullName evidence="1">Putative membrane protein insertion efficiency factor</fullName>
    </recommendedName>
</protein>
<evidence type="ECO:0000255" key="1">
    <source>
        <dbReference type="HAMAP-Rule" id="MF_00386"/>
    </source>
</evidence>
<organism>
    <name type="scientific">Exiguobacterium sibiricum (strain DSM 17290 / CCUG 55495 / CIP 109462 / JCM 13490 / 255-15)</name>
    <dbReference type="NCBI Taxonomy" id="262543"/>
    <lineage>
        <taxon>Bacteria</taxon>
        <taxon>Bacillati</taxon>
        <taxon>Bacillota</taxon>
        <taxon>Bacilli</taxon>
        <taxon>Bacillales</taxon>
        <taxon>Bacillales Family XII. Incertae Sedis</taxon>
        <taxon>Exiguobacterium</taxon>
    </lineage>
</organism>
<dbReference type="EMBL" id="CP001022">
    <property type="protein sequence ID" value="ACB60009.1"/>
    <property type="molecule type" value="Genomic_DNA"/>
</dbReference>
<dbReference type="STRING" id="262543.Exig_0528"/>
<dbReference type="KEGG" id="esi:Exig_0528"/>
<dbReference type="eggNOG" id="COG0759">
    <property type="taxonomic scope" value="Bacteria"/>
</dbReference>
<dbReference type="HOGENOM" id="CLU_144811_2_2_9"/>
<dbReference type="OrthoDB" id="9801753at2"/>
<dbReference type="Proteomes" id="UP000001681">
    <property type="component" value="Chromosome"/>
</dbReference>
<dbReference type="GO" id="GO:0005886">
    <property type="term" value="C:plasma membrane"/>
    <property type="evidence" value="ECO:0007669"/>
    <property type="project" value="UniProtKB-SubCell"/>
</dbReference>
<dbReference type="HAMAP" id="MF_00386">
    <property type="entry name" value="UPF0161_YidD"/>
    <property type="match status" value="1"/>
</dbReference>
<dbReference type="InterPro" id="IPR002696">
    <property type="entry name" value="Membr_insert_effic_factor_YidD"/>
</dbReference>
<dbReference type="NCBIfam" id="TIGR00278">
    <property type="entry name" value="membrane protein insertion efficiency factor YidD"/>
    <property type="match status" value="1"/>
</dbReference>
<dbReference type="PANTHER" id="PTHR33383">
    <property type="entry name" value="MEMBRANE PROTEIN INSERTION EFFICIENCY FACTOR-RELATED"/>
    <property type="match status" value="1"/>
</dbReference>
<dbReference type="PANTHER" id="PTHR33383:SF1">
    <property type="entry name" value="MEMBRANE PROTEIN INSERTION EFFICIENCY FACTOR-RELATED"/>
    <property type="match status" value="1"/>
</dbReference>
<dbReference type="Pfam" id="PF01809">
    <property type="entry name" value="YidD"/>
    <property type="match status" value="1"/>
</dbReference>
<dbReference type="SMART" id="SM01234">
    <property type="entry name" value="Haemolytic"/>
    <property type="match status" value="1"/>
</dbReference>
<feature type="chain" id="PRO_1000122643" description="Putative membrane protein insertion efficiency factor">
    <location>
        <begin position="1"/>
        <end position="88"/>
    </location>
</feature>
<gene>
    <name type="ordered locus">Exig_0528</name>
</gene>
<keyword id="KW-1003">Cell membrane</keyword>
<keyword id="KW-0472">Membrane</keyword>
<keyword id="KW-1185">Reference proteome</keyword>
<name>YIDD_EXIS2</name>
<accession>B1YJH9</accession>
<comment type="function">
    <text evidence="1">Could be involved in insertion of integral membrane proteins into the membrane.</text>
</comment>
<comment type="subcellular location">
    <subcellularLocation>
        <location evidence="1">Cell membrane</location>
        <topology evidence="1">Peripheral membrane protein</topology>
        <orientation evidence="1">Cytoplasmic side</orientation>
    </subcellularLocation>
</comment>
<comment type="similarity">
    <text evidence="1">Belongs to the UPF0161 family.</text>
</comment>